<reference key="1">
    <citation type="journal article" date="1998" name="J. Bacteriol.">
        <title>Structural and functional analysis of the gene cluster encoding the enzymes of the arginine deiminase pathway of Lactobacillus sakei.</title>
        <authorList>
            <person name="Zuniga M."/>
            <person name="Champomier-Verges M.-C."/>
            <person name="Zagorec M."/>
            <person name="Perez-Martinez G."/>
        </authorList>
    </citation>
    <scope>NUCLEOTIDE SEQUENCE [GENOMIC DNA]</scope>
</reference>
<sequence length="337" mass="37774">MTNSVFQGRSLLAEKDFTKSELEYLIDFSLHLKDLKKKGIPHHYLEGKNIALLFEKNSTRTRAAFTTAAIDLGAHPEFLGKNDIQLGKKESVEDTAKVLGSMFDGIEFRALAKVVEDLAKYSGVPVWNGLTDEWHPTQMIADFMTVKENFGKLKGVTLTYVGDGRNNMANSLLVTGSMLGVNIHIVAPDSLQPTQEVRDLAEGYAKETGSKNMITSDVDAGVKGSDVLYTDVWVSMGEEDKFEERVNLLKPYQINMDMVKKTGNENMIIMHCLPAFHDIETEYGKKIDEQFGIQEMEITDEAFRSKYARQFEEAENRMHSIKAIMAATLGNLFIPQA</sequence>
<name>OTCC_LATSK</name>
<evidence type="ECO:0000250" key="1"/>
<evidence type="ECO:0000255" key="2">
    <source>
        <dbReference type="HAMAP-Rule" id="MF_01109"/>
    </source>
</evidence>
<evidence type="ECO:0000305" key="3"/>
<proteinExistence type="inferred from homology"/>
<comment type="function">
    <text evidence="1">Reversibly catalyzes the transfer of the carbamoyl group from carbamoyl phosphate (CP) to the N(epsilon) atom of ornithine (ORN) to produce L-citrulline.</text>
</comment>
<comment type="catalytic activity">
    <reaction>
        <text>carbamoyl phosphate + L-ornithine = L-citrulline + phosphate + H(+)</text>
        <dbReference type="Rhea" id="RHEA:19513"/>
        <dbReference type="ChEBI" id="CHEBI:15378"/>
        <dbReference type="ChEBI" id="CHEBI:43474"/>
        <dbReference type="ChEBI" id="CHEBI:46911"/>
        <dbReference type="ChEBI" id="CHEBI:57743"/>
        <dbReference type="ChEBI" id="CHEBI:58228"/>
        <dbReference type="EC" id="2.1.3.3"/>
    </reaction>
</comment>
<comment type="pathway">
    <text>Amino-acid degradation; L-arginine degradation via ADI pathway; carbamoyl phosphate from L-arginine: step 2/2.</text>
</comment>
<comment type="subcellular location">
    <subcellularLocation>
        <location evidence="1">Cytoplasm</location>
    </subcellularLocation>
</comment>
<comment type="similarity">
    <text evidence="3">Belongs to the aspartate/ornithine carbamoyltransferase superfamily. OTCase family.</text>
</comment>
<keyword id="KW-0056">Arginine metabolism</keyword>
<keyword id="KW-0963">Cytoplasm</keyword>
<keyword id="KW-0808">Transferase</keyword>
<organism>
    <name type="scientific">Latilactobacillus sakei</name>
    <name type="common">Lactobacillus sakei</name>
    <dbReference type="NCBI Taxonomy" id="1599"/>
    <lineage>
        <taxon>Bacteria</taxon>
        <taxon>Bacillati</taxon>
        <taxon>Bacillota</taxon>
        <taxon>Bacilli</taxon>
        <taxon>Lactobacillales</taxon>
        <taxon>Lactobacillaceae</taxon>
        <taxon>Latilactobacillus</taxon>
    </lineage>
</organism>
<dbReference type="EC" id="2.1.3.3"/>
<dbReference type="EMBL" id="AJ001330">
    <property type="protein sequence ID" value="CAA04683.1"/>
    <property type="molecule type" value="Genomic_DNA"/>
</dbReference>
<dbReference type="PIR" id="T46742">
    <property type="entry name" value="T46742"/>
</dbReference>
<dbReference type="SMR" id="O53089"/>
<dbReference type="UniPathway" id="UPA00254">
    <property type="reaction ID" value="UER00365"/>
</dbReference>
<dbReference type="GO" id="GO:0005737">
    <property type="term" value="C:cytoplasm"/>
    <property type="evidence" value="ECO:0007669"/>
    <property type="project" value="UniProtKB-SubCell"/>
</dbReference>
<dbReference type="GO" id="GO:0016597">
    <property type="term" value="F:amino acid binding"/>
    <property type="evidence" value="ECO:0007669"/>
    <property type="project" value="InterPro"/>
</dbReference>
<dbReference type="GO" id="GO:0004585">
    <property type="term" value="F:ornithine carbamoyltransferase activity"/>
    <property type="evidence" value="ECO:0007669"/>
    <property type="project" value="UniProtKB-UniRule"/>
</dbReference>
<dbReference type="GO" id="GO:0042450">
    <property type="term" value="P:arginine biosynthetic process via ornithine"/>
    <property type="evidence" value="ECO:0007669"/>
    <property type="project" value="TreeGrafter"/>
</dbReference>
<dbReference type="GO" id="GO:0019547">
    <property type="term" value="P:arginine catabolic process to ornithine"/>
    <property type="evidence" value="ECO:0007669"/>
    <property type="project" value="UniProtKB-UniPathway"/>
</dbReference>
<dbReference type="GO" id="GO:0019240">
    <property type="term" value="P:citrulline biosynthetic process"/>
    <property type="evidence" value="ECO:0007669"/>
    <property type="project" value="TreeGrafter"/>
</dbReference>
<dbReference type="FunFam" id="3.40.50.1370:FF:000008">
    <property type="entry name" value="Ornithine carbamoyltransferase"/>
    <property type="match status" value="1"/>
</dbReference>
<dbReference type="Gene3D" id="3.40.50.1370">
    <property type="entry name" value="Aspartate/ornithine carbamoyltransferase"/>
    <property type="match status" value="2"/>
</dbReference>
<dbReference type="HAMAP" id="MF_01109">
    <property type="entry name" value="OTCase"/>
    <property type="match status" value="1"/>
</dbReference>
<dbReference type="InterPro" id="IPR006132">
    <property type="entry name" value="Asp/Orn_carbamoyltranf_P-bd"/>
</dbReference>
<dbReference type="InterPro" id="IPR006130">
    <property type="entry name" value="Asp/Orn_carbamoylTrfase"/>
</dbReference>
<dbReference type="InterPro" id="IPR036901">
    <property type="entry name" value="Asp/Orn_carbamoylTrfase_sf"/>
</dbReference>
<dbReference type="InterPro" id="IPR006131">
    <property type="entry name" value="Asp_carbamoyltransf_Asp/Orn-bd"/>
</dbReference>
<dbReference type="InterPro" id="IPR002292">
    <property type="entry name" value="Orn/put_carbamltrans"/>
</dbReference>
<dbReference type="InterPro" id="IPR024904">
    <property type="entry name" value="OTCase_ArgI"/>
</dbReference>
<dbReference type="NCBIfam" id="TIGR00658">
    <property type="entry name" value="orni_carb_tr"/>
    <property type="match status" value="1"/>
</dbReference>
<dbReference type="PANTHER" id="PTHR45753:SF1">
    <property type="entry name" value="ORNITHINE CARBAMOYLTRANSFERASE, CATABOLIC"/>
    <property type="match status" value="1"/>
</dbReference>
<dbReference type="PANTHER" id="PTHR45753">
    <property type="entry name" value="ORNITHINE CARBAMOYLTRANSFERASE, MITOCHONDRIAL"/>
    <property type="match status" value="1"/>
</dbReference>
<dbReference type="Pfam" id="PF00185">
    <property type="entry name" value="OTCace"/>
    <property type="match status" value="1"/>
</dbReference>
<dbReference type="Pfam" id="PF02729">
    <property type="entry name" value="OTCace_N"/>
    <property type="match status" value="1"/>
</dbReference>
<dbReference type="PRINTS" id="PR00100">
    <property type="entry name" value="AOTCASE"/>
</dbReference>
<dbReference type="PRINTS" id="PR00102">
    <property type="entry name" value="OTCASE"/>
</dbReference>
<dbReference type="SUPFAM" id="SSF53671">
    <property type="entry name" value="Aspartate/ornithine carbamoyltransferase"/>
    <property type="match status" value="1"/>
</dbReference>
<dbReference type="PROSITE" id="PS00097">
    <property type="entry name" value="CARBAMOYLTRANSFERASE"/>
    <property type="match status" value="1"/>
</dbReference>
<gene>
    <name type="primary">arcB</name>
</gene>
<accession>O53089</accession>
<feature type="chain" id="PRO_0000112938" description="Ornithine carbamoyltransferase, catabolic">
    <location>
        <begin position="1"/>
        <end position="337"/>
    </location>
</feature>
<feature type="binding site" evidence="2">
    <location>
        <begin position="58"/>
        <end position="61"/>
    </location>
    <ligand>
        <name>carbamoyl phosphate</name>
        <dbReference type="ChEBI" id="CHEBI:58228"/>
    </ligand>
</feature>
<feature type="binding site" evidence="2">
    <location>
        <position position="85"/>
    </location>
    <ligand>
        <name>carbamoyl phosphate</name>
        <dbReference type="ChEBI" id="CHEBI:58228"/>
    </ligand>
</feature>
<feature type="binding site" evidence="2">
    <location>
        <position position="109"/>
    </location>
    <ligand>
        <name>carbamoyl phosphate</name>
        <dbReference type="ChEBI" id="CHEBI:58228"/>
    </ligand>
</feature>
<feature type="binding site" evidence="2">
    <location>
        <begin position="135"/>
        <end position="138"/>
    </location>
    <ligand>
        <name>carbamoyl phosphate</name>
        <dbReference type="ChEBI" id="CHEBI:58228"/>
    </ligand>
</feature>
<feature type="binding site" evidence="2">
    <location>
        <position position="167"/>
    </location>
    <ligand>
        <name>L-ornithine</name>
        <dbReference type="ChEBI" id="CHEBI:46911"/>
    </ligand>
</feature>
<feature type="binding site" evidence="2">
    <location>
        <position position="231"/>
    </location>
    <ligand>
        <name>L-ornithine</name>
        <dbReference type="ChEBI" id="CHEBI:46911"/>
    </ligand>
</feature>
<feature type="binding site" evidence="2">
    <location>
        <begin position="235"/>
        <end position="236"/>
    </location>
    <ligand>
        <name>L-ornithine</name>
        <dbReference type="ChEBI" id="CHEBI:46911"/>
    </ligand>
</feature>
<feature type="binding site" evidence="2">
    <location>
        <begin position="272"/>
        <end position="273"/>
    </location>
    <ligand>
        <name>carbamoyl phosphate</name>
        <dbReference type="ChEBI" id="CHEBI:58228"/>
    </ligand>
</feature>
<feature type="binding site" evidence="2">
    <location>
        <position position="317"/>
    </location>
    <ligand>
        <name>carbamoyl phosphate</name>
        <dbReference type="ChEBI" id="CHEBI:58228"/>
    </ligand>
</feature>
<protein>
    <recommendedName>
        <fullName>Ornithine carbamoyltransferase, catabolic</fullName>
        <shortName>OTCase</shortName>
        <ecNumber>2.1.3.3</ecNumber>
    </recommendedName>
</protein>